<reference key="1">
    <citation type="journal article" date="2004" name="Proc. Natl. Acad. Sci. U.S.A.">
        <title>Complete genomes of two clinical Staphylococcus aureus strains: evidence for the rapid evolution of virulence and drug resistance.</title>
        <authorList>
            <person name="Holden M.T.G."/>
            <person name="Feil E.J."/>
            <person name="Lindsay J.A."/>
            <person name="Peacock S.J."/>
            <person name="Day N.P.J."/>
            <person name="Enright M.C."/>
            <person name="Foster T.J."/>
            <person name="Moore C.E."/>
            <person name="Hurst L."/>
            <person name="Atkin R."/>
            <person name="Barron A."/>
            <person name="Bason N."/>
            <person name="Bentley S.D."/>
            <person name="Chillingworth C."/>
            <person name="Chillingworth T."/>
            <person name="Churcher C."/>
            <person name="Clark L."/>
            <person name="Corton C."/>
            <person name="Cronin A."/>
            <person name="Doggett J."/>
            <person name="Dowd L."/>
            <person name="Feltwell T."/>
            <person name="Hance Z."/>
            <person name="Harris B."/>
            <person name="Hauser H."/>
            <person name="Holroyd S."/>
            <person name="Jagels K."/>
            <person name="James K.D."/>
            <person name="Lennard N."/>
            <person name="Line A."/>
            <person name="Mayes R."/>
            <person name="Moule S."/>
            <person name="Mungall K."/>
            <person name="Ormond D."/>
            <person name="Quail M.A."/>
            <person name="Rabbinowitsch E."/>
            <person name="Rutherford K.M."/>
            <person name="Sanders M."/>
            <person name="Sharp S."/>
            <person name="Simmonds M."/>
            <person name="Stevens K."/>
            <person name="Whitehead S."/>
            <person name="Barrell B.G."/>
            <person name="Spratt B.G."/>
            <person name="Parkhill J."/>
        </authorList>
    </citation>
    <scope>NUCLEOTIDE SEQUENCE [LARGE SCALE GENOMIC DNA]</scope>
    <source>
        <strain>MSSA476</strain>
    </source>
</reference>
<gene>
    <name evidence="1" type="primary">dnaG</name>
    <name type="ordered locus">SAS1500</name>
</gene>
<organism>
    <name type="scientific">Staphylococcus aureus (strain MSSA476)</name>
    <dbReference type="NCBI Taxonomy" id="282459"/>
    <lineage>
        <taxon>Bacteria</taxon>
        <taxon>Bacillati</taxon>
        <taxon>Bacillota</taxon>
        <taxon>Bacilli</taxon>
        <taxon>Bacillales</taxon>
        <taxon>Staphylococcaceae</taxon>
        <taxon>Staphylococcus</taxon>
    </lineage>
</organism>
<protein>
    <recommendedName>
        <fullName evidence="1">DNA primase</fullName>
        <ecNumber evidence="1">2.7.7.101</ecNumber>
    </recommendedName>
</protein>
<name>DNAG_STAAS</name>
<feature type="chain" id="PRO_0000180522" description="DNA primase">
    <location>
        <begin position="1"/>
        <end position="605"/>
    </location>
</feature>
<feature type="domain" description="Toprim" evidence="1">
    <location>
        <begin position="260"/>
        <end position="341"/>
    </location>
</feature>
<feature type="zinc finger region" description="CHC2-type" evidence="1">
    <location>
        <begin position="38"/>
        <end position="62"/>
    </location>
</feature>
<feature type="binding site" evidence="1">
    <location>
        <position position="266"/>
    </location>
    <ligand>
        <name>Mg(2+)</name>
        <dbReference type="ChEBI" id="CHEBI:18420"/>
        <label>1</label>
        <note>catalytic</note>
    </ligand>
</feature>
<feature type="binding site" evidence="1">
    <location>
        <position position="310"/>
    </location>
    <ligand>
        <name>Mg(2+)</name>
        <dbReference type="ChEBI" id="CHEBI:18420"/>
        <label>1</label>
        <note>catalytic</note>
    </ligand>
</feature>
<feature type="binding site" evidence="1">
    <location>
        <position position="310"/>
    </location>
    <ligand>
        <name>Mg(2+)</name>
        <dbReference type="ChEBI" id="CHEBI:18420"/>
        <label>2</label>
    </ligand>
</feature>
<feature type="binding site" evidence="1">
    <location>
        <position position="312"/>
    </location>
    <ligand>
        <name>Mg(2+)</name>
        <dbReference type="ChEBI" id="CHEBI:18420"/>
        <label>2</label>
    </ligand>
</feature>
<comment type="function">
    <text evidence="1">RNA polymerase that catalyzes the synthesis of short RNA molecules used as primers for DNA polymerase during DNA replication.</text>
</comment>
<comment type="catalytic activity">
    <reaction evidence="1">
        <text>ssDNA + n NTP = ssDNA/pppN(pN)n-1 hybrid + (n-1) diphosphate.</text>
        <dbReference type="EC" id="2.7.7.101"/>
    </reaction>
</comment>
<comment type="cofactor">
    <cofactor evidence="1">
        <name>Zn(2+)</name>
        <dbReference type="ChEBI" id="CHEBI:29105"/>
    </cofactor>
    <text evidence="1">Binds 1 zinc ion per monomer.</text>
</comment>
<comment type="cofactor">
    <cofactor evidence="1">
        <name>Mg(2+)</name>
        <dbReference type="ChEBI" id="CHEBI:18420"/>
    </cofactor>
    <text evidence="1">Binds two Mg(2+) per subunit.</text>
</comment>
<comment type="subunit">
    <text evidence="1">Monomer. Interacts with DnaB.</text>
</comment>
<comment type="domain">
    <text evidence="1">Contains an N-terminal zinc-binding domain, a central core domain that contains the primase activity, and a C-terminal DnaB-binding domain.</text>
</comment>
<comment type="similarity">
    <text evidence="1">Belongs to the DnaG primase family.</text>
</comment>
<sequence>MRIDQSIINEIKDKTDILDLVSEYVKLEKRGRNYIGLCPFHDEKTPSFTVSEDKQICHCFGCKKGGNVFQFTQEIKDISFVEAVKELGDRVNVAVDIEATQFNSNIQIASDDLQMIEMHELIQEFYYYALTKTVEGEQALTYLQERGFTDALIKERGIGFAPDSSHFCHDFLQKRGYDIELAYEAGLLSRNEENFSYYDRFRNRIMFPLKNAQGRIVGYSGRTYTGQEPKYLNSPETPIFQKRKLLYNLDKARKSIRKLDEIVLLEGFMDVIKSDTAGLKNVVATMGTQLSDEHITFIRKLTLNITLMFDGDFAGSEATLKTGQHLLQQGLNVFVIQLPSGMDPDEYIGKYGNDAFTAFVKNDKKSFAHYKVSILKDEIAHNDLSYERYLKELSHDISLMKSSILQQKALNDVAPFFNVSPEQLANEIQFNQAPANYYPDDEYGGYDEYGGYIEPEPIGMAQFDNLSRQEKAERAFLKHLMRDKDTFLNYYESVDKDNFTNQHFKYVFEVLHDFYAENDQYNISDAVQYVNSNELRETLISLEQYNLNDEPYENEIDDYVNVINEKGQETIESLNHKLREATRIGDVELQKYYLQQIVAKNKERM</sequence>
<proteinExistence type="inferred from homology"/>
<evidence type="ECO:0000255" key="1">
    <source>
        <dbReference type="HAMAP-Rule" id="MF_00974"/>
    </source>
</evidence>
<accession>Q6G904</accession>
<keyword id="KW-0235">DNA replication</keyword>
<keyword id="KW-0238">DNA-binding</keyword>
<keyword id="KW-0240">DNA-directed RNA polymerase</keyword>
<keyword id="KW-0460">Magnesium</keyword>
<keyword id="KW-0479">Metal-binding</keyword>
<keyword id="KW-0548">Nucleotidyltransferase</keyword>
<keyword id="KW-0639">Primosome</keyword>
<keyword id="KW-0804">Transcription</keyword>
<keyword id="KW-0808">Transferase</keyword>
<keyword id="KW-0862">Zinc</keyword>
<keyword id="KW-0863">Zinc-finger</keyword>
<dbReference type="EC" id="2.7.7.101" evidence="1"/>
<dbReference type="EMBL" id="BX571857">
    <property type="protein sequence ID" value="CAG43301.1"/>
    <property type="molecule type" value="Genomic_DNA"/>
</dbReference>
<dbReference type="RefSeq" id="WP_001217234.1">
    <property type="nucleotide sequence ID" value="NC_002953.3"/>
</dbReference>
<dbReference type="BMRB" id="Q6G904"/>
<dbReference type="SMR" id="Q6G904"/>
<dbReference type="KEGG" id="sas:SAS1500"/>
<dbReference type="HOGENOM" id="CLU_013501_3_3_9"/>
<dbReference type="GO" id="GO:0005737">
    <property type="term" value="C:cytoplasm"/>
    <property type="evidence" value="ECO:0007669"/>
    <property type="project" value="TreeGrafter"/>
</dbReference>
<dbReference type="GO" id="GO:0000428">
    <property type="term" value="C:DNA-directed RNA polymerase complex"/>
    <property type="evidence" value="ECO:0007669"/>
    <property type="project" value="UniProtKB-KW"/>
</dbReference>
<dbReference type="GO" id="GO:1990077">
    <property type="term" value="C:primosome complex"/>
    <property type="evidence" value="ECO:0007669"/>
    <property type="project" value="UniProtKB-KW"/>
</dbReference>
<dbReference type="GO" id="GO:0005524">
    <property type="term" value="F:ATP binding"/>
    <property type="evidence" value="ECO:0007669"/>
    <property type="project" value="InterPro"/>
</dbReference>
<dbReference type="GO" id="GO:0003677">
    <property type="term" value="F:DNA binding"/>
    <property type="evidence" value="ECO:0007669"/>
    <property type="project" value="UniProtKB-KW"/>
</dbReference>
<dbReference type="GO" id="GO:0003678">
    <property type="term" value="F:DNA helicase activity"/>
    <property type="evidence" value="ECO:0007669"/>
    <property type="project" value="InterPro"/>
</dbReference>
<dbReference type="GO" id="GO:0003899">
    <property type="term" value="F:DNA-directed RNA polymerase activity"/>
    <property type="evidence" value="ECO:0007669"/>
    <property type="project" value="InterPro"/>
</dbReference>
<dbReference type="GO" id="GO:0008270">
    <property type="term" value="F:zinc ion binding"/>
    <property type="evidence" value="ECO:0007669"/>
    <property type="project" value="UniProtKB-UniRule"/>
</dbReference>
<dbReference type="GO" id="GO:0006269">
    <property type="term" value="P:DNA replication, synthesis of primer"/>
    <property type="evidence" value="ECO:0007669"/>
    <property type="project" value="UniProtKB-UniRule"/>
</dbReference>
<dbReference type="CDD" id="cd03364">
    <property type="entry name" value="TOPRIM_DnaG_primases"/>
    <property type="match status" value="1"/>
</dbReference>
<dbReference type="FunFam" id="3.90.580.10:FF:000001">
    <property type="entry name" value="DNA primase"/>
    <property type="match status" value="1"/>
</dbReference>
<dbReference type="FunFam" id="3.90.980.10:FF:000001">
    <property type="entry name" value="DNA primase"/>
    <property type="match status" value="1"/>
</dbReference>
<dbReference type="Gene3D" id="3.40.1360.10">
    <property type="match status" value="1"/>
</dbReference>
<dbReference type="Gene3D" id="3.90.980.10">
    <property type="entry name" value="DNA primase, catalytic core, N-terminal domain"/>
    <property type="match status" value="1"/>
</dbReference>
<dbReference type="Gene3D" id="1.10.860.10">
    <property type="entry name" value="DNAb Helicase, Chain A"/>
    <property type="match status" value="1"/>
</dbReference>
<dbReference type="Gene3D" id="1.20.50.20">
    <property type="entry name" value="DnaG, RNA polymerase domain, helical bundle"/>
    <property type="match status" value="1"/>
</dbReference>
<dbReference type="Gene3D" id="3.90.580.10">
    <property type="entry name" value="Zinc finger, CHC2-type domain"/>
    <property type="match status" value="1"/>
</dbReference>
<dbReference type="HAMAP" id="MF_00974">
    <property type="entry name" value="DNA_primase_DnaG"/>
    <property type="match status" value="1"/>
</dbReference>
<dbReference type="InterPro" id="IPR036185">
    <property type="entry name" value="DNA_heli_DnaB-like_N_sf"/>
</dbReference>
<dbReference type="InterPro" id="IPR016136">
    <property type="entry name" value="DNA_helicase_N/primase_C"/>
</dbReference>
<dbReference type="InterPro" id="IPR037068">
    <property type="entry name" value="DNA_primase_core_N_sf"/>
</dbReference>
<dbReference type="InterPro" id="IPR006295">
    <property type="entry name" value="DNA_primase_DnaG"/>
</dbReference>
<dbReference type="InterPro" id="IPR036977">
    <property type="entry name" value="DNA_primase_Znf_CHC2"/>
</dbReference>
<dbReference type="InterPro" id="IPR030846">
    <property type="entry name" value="DnaG_bac"/>
</dbReference>
<dbReference type="InterPro" id="IPR048453">
    <property type="entry name" value="DnaG_cat_HB"/>
</dbReference>
<dbReference type="InterPro" id="IPR013264">
    <property type="entry name" value="DNAG_N"/>
</dbReference>
<dbReference type="InterPro" id="IPR050219">
    <property type="entry name" value="DnaG_primase"/>
</dbReference>
<dbReference type="InterPro" id="IPR034151">
    <property type="entry name" value="TOPRIM_DnaG_bac"/>
</dbReference>
<dbReference type="InterPro" id="IPR006171">
    <property type="entry name" value="TOPRIM_dom"/>
</dbReference>
<dbReference type="InterPro" id="IPR002694">
    <property type="entry name" value="Znf_CHC2"/>
</dbReference>
<dbReference type="NCBIfam" id="TIGR01391">
    <property type="entry name" value="dnaG"/>
    <property type="match status" value="1"/>
</dbReference>
<dbReference type="PANTHER" id="PTHR30313">
    <property type="entry name" value="DNA PRIMASE"/>
    <property type="match status" value="1"/>
</dbReference>
<dbReference type="PANTHER" id="PTHR30313:SF2">
    <property type="entry name" value="DNA PRIMASE"/>
    <property type="match status" value="1"/>
</dbReference>
<dbReference type="Pfam" id="PF21650">
    <property type="entry name" value="DnaG_cat_HB"/>
    <property type="match status" value="1"/>
</dbReference>
<dbReference type="Pfam" id="PF08275">
    <property type="entry name" value="DNAG_N"/>
    <property type="match status" value="1"/>
</dbReference>
<dbReference type="Pfam" id="PF13155">
    <property type="entry name" value="Toprim_2"/>
    <property type="match status" value="1"/>
</dbReference>
<dbReference type="Pfam" id="PF01807">
    <property type="entry name" value="Zn_ribbon_DnaG"/>
    <property type="match status" value="1"/>
</dbReference>
<dbReference type="PIRSF" id="PIRSF002811">
    <property type="entry name" value="DnaG"/>
    <property type="match status" value="1"/>
</dbReference>
<dbReference type="SMART" id="SM00493">
    <property type="entry name" value="TOPRIM"/>
    <property type="match status" value="1"/>
</dbReference>
<dbReference type="SMART" id="SM00400">
    <property type="entry name" value="ZnF_CHCC"/>
    <property type="match status" value="1"/>
</dbReference>
<dbReference type="SUPFAM" id="SSF56731">
    <property type="entry name" value="DNA primase core"/>
    <property type="match status" value="1"/>
</dbReference>
<dbReference type="SUPFAM" id="SSF48024">
    <property type="entry name" value="N-terminal domain of DnaB helicase"/>
    <property type="match status" value="1"/>
</dbReference>
<dbReference type="SUPFAM" id="SSF57783">
    <property type="entry name" value="Zinc beta-ribbon"/>
    <property type="match status" value="1"/>
</dbReference>
<dbReference type="PROSITE" id="PS50880">
    <property type="entry name" value="TOPRIM"/>
    <property type="match status" value="1"/>
</dbReference>